<proteinExistence type="inferred from homology"/>
<name>CLPX_STRPZ</name>
<keyword id="KW-0067">ATP-binding</keyword>
<keyword id="KW-0143">Chaperone</keyword>
<keyword id="KW-0479">Metal-binding</keyword>
<keyword id="KW-0547">Nucleotide-binding</keyword>
<keyword id="KW-0862">Zinc</keyword>
<organism>
    <name type="scientific">Streptococcus pyogenes serotype M49 (strain NZ131)</name>
    <dbReference type="NCBI Taxonomy" id="471876"/>
    <lineage>
        <taxon>Bacteria</taxon>
        <taxon>Bacillati</taxon>
        <taxon>Bacillota</taxon>
        <taxon>Bacilli</taxon>
        <taxon>Lactobacillales</taxon>
        <taxon>Streptococcaceae</taxon>
        <taxon>Streptococcus</taxon>
    </lineage>
</organism>
<gene>
    <name evidence="1" type="primary">clpX</name>
    <name type="ordered locus">Spy49_0700</name>
</gene>
<comment type="function">
    <text evidence="1">ATP-dependent specificity component of the Clp protease. It directs the protease to specific substrates. Can perform chaperone functions in the absence of ClpP.</text>
</comment>
<comment type="subunit">
    <text evidence="1">Component of the ClpX-ClpP complex. Forms a hexameric ring that, in the presence of ATP, binds to fourteen ClpP subunits assembled into a disk-like structure with a central cavity, resembling the structure of eukaryotic proteasomes.</text>
</comment>
<comment type="similarity">
    <text evidence="1">Belongs to the ClpX chaperone family.</text>
</comment>
<protein>
    <recommendedName>
        <fullName evidence="1">ATP-dependent Clp protease ATP-binding subunit ClpX</fullName>
    </recommendedName>
</protein>
<evidence type="ECO:0000255" key="1">
    <source>
        <dbReference type="HAMAP-Rule" id="MF_00175"/>
    </source>
</evidence>
<evidence type="ECO:0000255" key="2">
    <source>
        <dbReference type="PROSITE-ProRule" id="PRU01250"/>
    </source>
</evidence>
<dbReference type="EMBL" id="CP000829">
    <property type="protein sequence ID" value="ACI61015.1"/>
    <property type="molecule type" value="Genomic_DNA"/>
</dbReference>
<dbReference type="SMR" id="B5XL03"/>
<dbReference type="KEGG" id="soz:Spy49_0700"/>
<dbReference type="HOGENOM" id="CLU_014218_8_2_9"/>
<dbReference type="Proteomes" id="UP000001039">
    <property type="component" value="Chromosome"/>
</dbReference>
<dbReference type="GO" id="GO:0009376">
    <property type="term" value="C:HslUV protease complex"/>
    <property type="evidence" value="ECO:0007669"/>
    <property type="project" value="TreeGrafter"/>
</dbReference>
<dbReference type="GO" id="GO:0005524">
    <property type="term" value="F:ATP binding"/>
    <property type="evidence" value="ECO:0007669"/>
    <property type="project" value="UniProtKB-UniRule"/>
</dbReference>
<dbReference type="GO" id="GO:0016887">
    <property type="term" value="F:ATP hydrolysis activity"/>
    <property type="evidence" value="ECO:0007669"/>
    <property type="project" value="InterPro"/>
</dbReference>
<dbReference type="GO" id="GO:0140662">
    <property type="term" value="F:ATP-dependent protein folding chaperone"/>
    <property type="evidence" value="ECO:0007669"/>
    <property type="project" value="InterPro"/>
</dbReference>
<dbReference type="GO" id="GO:0046983">
    <property type="term" value="F:protein dimerization activity"/>
    <property type="evidence" value="ECO:0007669"/>
    <property type="project" value="InterPro"/>
</dbReference>
<dbReference type="GO" id="GO:0051082">
    <property type="term" value="F:unfolded protein binding"/>
    <property type="evidence" value="ECO:0007669"/>
    <property type="project" value="UniProtKB-UniRule"/>
</dbReference>
<dbReference type="GO" id="GO:0008270">
    <property type="term" value="F:zinc ion binding"/>
    <property type="evidence" value="ECO:0007669"/>
    <property type="project" value="InterPro"/>
</dbReference>
<dbReference type="GO" id="GO:0051301">
    <property type="term" value="P:cell division"/>
    <property type="evidence" value="ECO:0007669"/>
    <property type="project" value="TreeGrafter"/>
</dbReference>
<dbReference type="GO" id="GO:0051603">
    <property type="term" value="P:proteolysis involved in protein catabolic process"/>
    <property type="evidence" value="ECO:0007669"/>
    <property type="project" value="TreeGrafter"/>
</dbReference>
<dbReference type="CDD" id="cd19497">
    <property type="entry name" value="RecA-like_ClpX"/>
    <property type="match status" value="1"/>
</dbReference>
<dbReference type="FunFam" id="1.10.8.60:FF:000002">
    <property type="entry name" value="ATP-dependent Clp protease ATP-binding subunit ClpX"/>
    <property type="match status" value="1"/>
</dbReference>
<dbReference type="FunFam" id="3.40.50.300:FF:000005">
    <property type="entry name" value="ATP-dependent Clp protease ATP-binding subunit ClpX"/>
    <property type="match status" value="1"/>
</dbReference>
<dbReference type="Gene3D" id="1.10.8.60">
    <property type="match status" value="1"/>
</dbReference>
<dbReference type="Gene3D" id="6.20.220.10">
    <property type="entry name" value="ClpX chaperone, C4-type zinc finger domain"/>
    <property type="match status" value="1"/>
</dbReference>
<dbReference type="Gene3D" id="3.40.50.300">
    <property type="entry name" value="P-loop containing nucleotide triphosphate hydrolases"/>
    <property type="match status" value="1"/>
</dbReference>
<dbReference type="HAMAP" id="MF_00175">
    <property type="entry name" value="ClpX"/>
    <property type="match status" value="1"/>
</dbReference>
<dbReference type="InterPro" id="IPR003593">
    <property type="entry name" value="AAA+_ATPase"/>
</dbReference>
<dbReference type="InterPro" id="IPR050052">
    <property type="entry name" value="ATP-dep_Clp_protease_ClpX"/>
</dbReference>
<dbReference type="InterPro" id="IPR003959">
    <property type="entry name" value="ATPase_AAA_core"/>
</dbReference>
<dbReference type="InterPro" id="IPR019489">
    <property type="entry name" value="Clp_ATPase_C"/>
</dbReference>
<dbReference type="InterPro" id="IPR004487">
    <property type="entry name" value="Clp_protease_ATP-bd_su_ClpX"/>
</dbReference>
<dbReference type="InterPro" id="IPR046425">
    <property type="entry name" value="ClpX_bact"/>
</dbReference>
<dbReference type="InterPro" id="IPR027417">
    <property type="entry name" value="P-loop_NTPase"/>
</dbReference>
<dbReference type="InterPro" id="IPR010603">
    <property type="entry name" value="Znf_CppX_C4"/>
</dbReference>
<dbReference type="InterPro" id="IPR038366">
    <property type="entry name" value="Znf_CppX_C4_sf"/>
</dbReference>
<dbReference type="NCBIfam" id="TIGR00382">
    <property type="entry name" value="clpX"/>
    <property type="match status" value="1"/>
</dbReference>
<dbReference type="NCBIfam" id="NF003745">
    <property type="entry name" value="PRK05342.1"/>
    <property type="match status" value="1"/>
</dbReference>
<dbReference type="PANTHER" id="PTHR48102:SF7">
    <property type="entry name" value="ATP-DEPENDENT CLP PROTEASE ATP-BINDING SUBUNIT CLPX-LIKE, MITOCHONDRIAL"/>
    <property type="match status" value="1"/>
</dbReference>
<dbReference type="PANTHER" id="PTHR48102">
    <property type="entry name" value="ATP-DEPENDENT CLP PROTEASE ATP-BINDING SUBUNIT CLPX-LIKE, MITOCHONDRIAL-RELATED"/>
    <property type="match status" value="1"/>
</dbReference>
<dbReference type="Pfam" id="PF07724">
    <property type="entry name" value="AAA_2"/>
    <property type="match status" value="1"/>
</dbReference>
<dbReference type="Pfam" id="PF10431">
    <property type="entry name" value="ClpB_D2-small"/>
    <property type="match status" value="1"/>
</dbReference>
<dbReference type="Pfam" id="PF06689">
    <property type="entry name" value="zf-C4_ClpX"/>
    <property type="match status" value="1"/>
</dbReference>
<dbReference type="SMART" id="SM00382">
    <property type="entry name" value="AAA"/>
    <property type="match status" value="1"/>
</dbReference>
<dbReference type="SMART" id="SM01086">
    <property type="entry name" value="ClpB_D2-small"/>
    <property type="match status" value="1"/>
</dbReference>
<dbReference type="SMART" id="SM00994">
    <property type="entry name" value="zf-C4_ClpX"/>
    <property type="match status" value="1"/>
</dbReference>
<dbReference type="SUPFAM" id="SSF57716">
    <property type="entry name" value="Glucocorticoid receptor-like (DNA-binding domain)"/>
    <property type="match status" value="1"/>
</dbReference>
<dbReference type="SUPFAM" id="SSF52540">
    <property type="entry name" value="P-loop containing nucleoside triphosphate hydrolases"/>
    <property type="match status" value="1"/>
</dbReference>
<dbReference type="PROSITE" id="PS51902">
    <property type="entry name" value="CLPX_ZB"/>
    <property type="match status" value="1"/>
</dbReference>
<feature type="chain" id="PRO_1000098009" description="ATP-dependent Clp protease ATP-binding subunit ClpX">
    <location>
        <begin position="1"/>
        <end position="409"/>
    </location>
</feature>
<feature type="domain" description="ClpX-type ZB" evidence="2">
    <location>
        <begin position="1"/>
        <end position="54"/>
    </location>
</feature>
<feature type="binding site" evidence="2">
    <location>
        <position position="13"/>
    </location>
    <ligand>
        <name>Zn(2+)</name>
        <dbReference type="ChEBI" id="CHEBI:29105"/>
    </ligand>
</feature>
<feature type="binding site" evidence="2">
    <location>
        <position position="16"/>
    </location>
    <ligand>
        <name>Zn(2+)</name>
        <dbReference type="ChEBI" id="CHEBI:29105"/>
    </ligand>
</feature>
<feature type="binding site" evidence="2">
    <location>
        <position position="35"/>
    </location>
    <ligand>
        <name>Zn(2+)</name>
        <dbReference type="ChEBI" id="CHEBI:29105"/>
    </ligand>
</feature>
<feature type="binding site" evidence="2">
    <location>
        <position position="38"/>
    </location>
    <ligand>
        <name>Zn(2+)</name>
        <dbReference type="ChEBI" id="CHEBI:29105"/>
    </ligand>
</feature>
<feature type="binding site" evidence="1">
    <location>
        <begin position="119"/>
        <end position="126"/>
    </location>
    <ligand>
        <name>ATP</name>
        <dbReference type="ChEBI" id="CHEBI:30616"/>
    </ligand>
</feature>
<reference key="1">
    <citation type="journal article" date="2008" name="J. Bacteriol.">
        <title>Genome sequence of a nephritogenic and highly transformable M49 strain of Streptococcus pyogenes.</title>
        <authorList>
            <person name="McShan W.M."/>
            <person name="Ferretti J.J."/>
            <person name="Karasawa T."/>
            <person name="Suvorov A.N."/>
            <person name="Lin S."/>
            <person name="Qin B."/>
            <person name="Jia H."/>
            <person name="Kenton S."/>
            <person name="Najar F."/>
            <person name="Wu H."/>
            <person name="Scott J."/>
            <person name="Roe B.A."/>
            <person name="Savic D.J."/>
        </authorList>
    </citation>
    <scope>NUCLEOTIDE SEQUENCE [LARGE SCALE GENOMIC DNA]</scope>
    <source>
        <strain>NZ131</strain>
    </source>
</reference>
<accession>B5XL03</accession>
<sequence length="409" mass="45021">MAGSRTNDIKVYCSFCGKSQDDVKKIIAGNNVFICNECVALSQEIIKEELAEEVLADLTEVPKPKELLDVLNQYVVGQDRAKRALSVAVYNHYKRVSFTESRDDDDVDLQKSNILMIGPTGSGKTFLAQTLAKSLNVPFAIADATSLTEAGYVGEDVENILLKLIQAADYNVERAERGIIYVDEIDKIAKKGENVSITRDVSGEGVQQALLKIIEGTVASVPPQGGRKHPNQEMIQIDTKNILFIVGGAFDGIEEIVKQRLGEKVIGFGQNSRKIDDNASYMQEIISEDIQKFGLIPEFIGRLPVVAALEQLKTSDLIRILTEPRNALVKQYQALLSYDGVELEFDKAALEAIATKAIERKTGARGLRSIIEETMLDIMFEIPSQEDVTKVRITKAAVEGKSKPVLETA</sequence>